<name>LEU3_SALTI</name>
<accession>Q8Z9I1</accession>
<comment type="function">
    <text evidence="1">Catalyzes the oxidation of 3-carboxy-2-hydroxy-4-methylpentanoate (3-isopropylmalate) to 3-carboxy-4-methyl-2-oxopentanoate. The product decarboxylates to 4-methyl-2 oxopentanoate.</text>
</comment>
<comment type="catalytic activity">
    <reaction evidence="1">
        <text>(2R,3S)-3-isopropylmalate + NAD(+) = 4-methyl-2-oxopentanoate + CO2 + NADH</text>
        <dbReference type="Rhea" id="RHEA:32271"/>
        <dbReference type="ChEBI" id="CHEBI:16526"/>
        <dbReference type="ChEBI" id="CHEBI:17865"/>
        <dbReference type="ChEBI" id="CHEBI:35121"/>
        <dbReference type="ChEBI" id="CHEBI:57540"/>
        <dbReference type="ChEBI" id="CHEBI:57945"/>
        <dbReference type="EC" id="1.1.1.85"/>
    </reaction>
</comment>
<comment type="cofactor">
    <cofactor evidence="1">
        <name>Mg(2+)</name>
        <dbReference type="ChEBI" id="CHEBI:18420"/>
    </cofactor>
    <cofactor evidence="1">
        <name>Mn(2+)</name>
        <dbReference type="ChEBI" id="CHEBI:29035"/>
    </cofactor>
    <text evidence="1">Binds 1 Mg(2+) or Mn(2+) ion per subunit.</text>
</comment>
<comment type="pathway">
    <text evidence="1">Amino-acid biosynthesis; L-leucine biosynthesis; L-leucine from 3-methyl-2-oxobutanoate: step 3/4.</text>
</comment>
<comment type="subunit">
    <text evidence="1">Homodimer.</text>
</comment>
<comment type="subcellular location">
    <subcellularLocation>
        <location evidence="1">Cytoplasm</location>
    </subcellularLocation>
</comment>
<comment type="similarity">
    <text evidence="1">Belongs to the isocitrate and isopropylmalate dehydrogenases family. LeuB type 1 subfamily.</text>
</comment>
<dbReference type="EC" id="1.1.1.85" evidence="1"/>
<dbReference type="EMBL" id="AL513382">
    <property type="protein sequence ID" value="CAD01269.1"/>
    <property type="molecule type" value="Genomic_DNA"/>
</dbReference>
<dbReference type="EMBL" id="AE014613">
    <property type="protein sequence ID" value="AAO67848.1"/>
    <property type="molecule type" value="Genomic_DNA"/>
</dbReference>
<dbReference type="RefSeq" id="NP_454724.1">
    <property type="nucleotide sequence ID" value="NC_003198.1"/>
</dbReference>
<dbReference type="RefSeq" id="WP_000042333.1">
    <property type="nucleotide sequence ID" value="NZ_WSUR01000009.1"/>
</dbReference>
<dbReference type="SMR" id="Q8Z9I1"/>
<dbReference type="STRING" id="220341.gene:17584171"/>
<dbReference type="KEGG" id="stt:t0116"/>
<dbReference type="KEGG" id="sty:STY0131"/>
<dbReference type="PATRIC" id="fig|220341.7.peg.132"/>
<dbReference type="eggNOG" id="COG0473">
    <property type="taxonomic scope" value="Bacteria"/>
</dbReference>
<dbReference type="HOGENOM" id="CLU_031953_0_3_6"/>
<dbReference type="OMA" id="EYDLGAR"/>
<dbReference type="OrthoDB" id="9767905at2"/>
<dbReference type="UniPathway" id="UPA00048">
    <property type="reaction ID" value="UER00072"/>
</dbReference>
<dbReference type="Proteomes" id="UP000000541">
    <property type="component" value="Chromosome"/>
</dbReference>
<dbReference type="Proteomes" id="UP000002670">
    <property type="component" value="Chromosome"/>
</dbReference>
<dbReference type="GO" id="GO:0005829">
    <property type="term" value="C:cytosol"/>
    <property type="evidence" value="ECO:0007669"/>
    <property type="project" value="TreeGrafter"/>
</dbReference>
<dbReference type="GO" id="GO:0003862">
    <property type="term" value="F:3-isopropylmalate dehydrogenase activity"/>
    <property type="evidence" value="ECO:0007669"/>
    <property type="project" value="UniProtKB-UniRule"/>
</dbReference>
<dbReference type="GO" id="GO:0000287">
    <property type="term" value="F:magnesium ion binding"/>
    <property type="evidence" value="ECO:0007669"/>
    <property type="project" value="InterPro"/>
</dbReference>
<dbReference type="GO" id="GO:0051287">
    <property type="term" value="F:NAD binding"/>
    <property type="evidence" value="ECO:0007669"/>
    <property type="project" value="InterPro"/>
</dbReference>
<dbReference type="GO" id="GO:0009098">
    <property type="term" value="P:L-leucine biosynthetic process"/>
    <property type="evidence" value="ECO:0007669"/>
    <property type="project" value="UniProtKB-UniRule"/>
</dbReference>
<dbReference type="FunFam" id="3.40.718.10:FF:000004">
    <property type="entry name" value="3-isopropylmalate dehydrogenase"/>
    <property type="match status" value="1"/>
</dbReference>
<dbReference type="Gene3D" id="3.40.718.10">
    <property type="entry name" value="Isopropylmalate Dehydrogenase"/>
    <property type="match status" value="1"/>
</dbReference>
<dbReference type="HAMAP" id="MF_01033">
    <property type="entry name" value="LeuB_type1"/>
    <property type="match status" value="1"/>
</dbReference>
<dbReference type="InterPro" id="IPR019818">
    <property type="entry name" value="IsoCit/isopropylmalate_DH_CS"/>
</dbReference>
<dbReference type="InterPro" id="IPR024084">
    <property type="entry name" value="IsoPropMal-DH-like_dom"/>
</dbReference>
<dbReference type="InterPro" id="IPR004429">
    <property type="entry name" value="Isopropylmalate_DH"/>
</dbReference>
<dbReference type="NCBIfam" id="TIGR00169">
    <property type="entry name" value="leuB"/>
    <property type="match status" value="1"/>
</dbReference>
<dbReference type="PANTHER" id="PTHR42979">
    <property type="entry name" value="3-ISOPROPYLMALATE DEHYDROGENASE"/>
    <property type="match status" value="1"/>
</dbReference>
<dbReference type="PANTHER" id="PTHR42979:SF1">
    <property type="entry name" value="3-ISOPROPYLMALATE DEHYDROGENASE"/>
    <property type="match status" value="1"/>
</dbReference>
<dbReference type="Pfam" id="PF00180">
    <property type="entry name" value="Iso_dh"/>
    <property type="match status" value="1"/>
</dbReference>
<dbReference type="SMART" id="SM01329">
    <property type="entry name" value="Iso_dh"/>
    <property type="match status" value="1"/>
</dbReference>
<dbReference type="SUPFAM" id="SSF53659">
    <property type="entry name" value="Isocitrate/Isopropylmalate dehydrogenase-like"/>
    <property type="match status" value="1"/>
</dbReference>
<dbReference type="PROSITE" id="PS00470">
    <property type="entry name" value="IDH_IMDH"/>
    <property type="match status" value="1"/>
</dbReference>
<proteinExistence type="inferred from homology"/>
<reference key="1">
    <citation type="journal article" date="2001" name="Nature">
        <title>Complete genome sequence of a multiple drug resistant Salmonella enterica serovar Typhi CT18.</title>
        <authorList>
            <person name="Parkhill J."/>
            <person name="Dougan G."/>
            <person name="James K.D."/>
            <person name="Thomson N.R."/>
            <person name="Pickard D."/>
            <person name="Wain J."/>
            <person name="Churcher C.M."/>
            <person name="Mungall K.L."/>
            <person name="Bentley S.D."/>
            <person name="Holden M.T.G."/>
            <person name="Sebaihia M."/>
            <person name="Baker S."/>
            <person name="Basham D."/>
            <person name="Brooks K."/>
            <person name="Chillingworth T."/>
            <person name="Connerton P."/>
            <person name="Cronin A."/>
            <person name="Davis P."/>
            <person name="Davies R.M."/>
            <person name="Dowd L."/>
            <person name="White N."/>
            <person name="Farrar J."/>
            <person name="Feltwell T."/>
            <person name="Hamlin N."/>
            <person name="Haque A."/>
            <person name="Hien T.T."/>
            <person name="Holroyd S."/>
            <person name="Jagels K."/>
            <person name="Krogh A."/>
            <person name="Larsen T.S."/>
            <person name="Leather S."/>
            <person name="Moule S."/>
            <person name="O'Gaora P."/>
            <person name="Parry C."/>
            <person name="Quail M.A."/>
            <person name="Rutherford K.M."/>
            <person name="Simmonds M."/>
            <person name="Skelton J."/>
            <person name="Stevens K."/>
            <person name="Whitehead S."/>
            <person name="Barrell B.G."/>
        </authorList>
    </citation>
    <scope>NUCLEOTIDE SEQUENCE [LARGE SCALE GENOMIC DNA]</scope>
    <source>
        <strain>CT18</strain>
    </source>
</reference>
<reference key="2">
    <citation type="journal article" date="2003" name="J. Bacteriol.">
        <title>Comparative genomics of Salmonella enterica serovar Typhi strains Ty2 and CT18.</title>
        <authorList>
            <person name="Deng W."/>
            <person name="Liou S.-R."/>
            <person name="Plunkett G. III"/>
            <person name="Mayhew G.F."/>
            <person name="Rose D.J."/>
            <person name="Burland V."/>
            <person name="Kodoyianni V."/>
            <person name="Schwartz D.C."/>
            <person name="Blattner F.R."/>
        </authorList>
    </citation>
    <scope>NUCLEOTIDE SEQUENCE [LARGE SCALE GENOMIC DNA]</scope>
    <source>
        <strain>ATCC 700931 / Ty2</strain>
    </source>
</reference>
<protein>
    <recommendedName>
        <fullName evidence="1">3-isopropylmalate dehydrogenase</fullName>
        <ecNumber evidence="1">1.1.1.85</ecNumber>
    </recommendedName>
    <alternativeName>
        <fullName evidence="1">3-IPM-DH</fullName>
    </alternativeName>
    <alternativeName>
        <fullName evidence="1">Beta-IPM dehydrogenase</fullName>
        <shortName evidence="1">IMDH</shortName>
    </alternativeName>
</protein>
<evidence type="ECO:0000255" key="1">
    <source>
        <dbReference type="HAMAP-Rule" id="MF_01033"/>
    </source>
</evidence>
<keyword id="KW-0028">Amino-acid biosynthesis</keyword>
<keyword id="KW-0100">Branched-chain amino acid biosynthesis</keyword>
<keyword id="KW-0963">Cytoplasm</keyword>
<keyword id="KW-0432">Leucine biosynthesis</keyword>
<keyword id="KW-0460">Magnesium</keyword>
<keyword id="KW-0464">Manganese</keyword>
<keyword id="KW-0479">Metal-binding</keyword>
<keyword id="KW-0520">NAD</keyword>
<keyword id="KW-0560">Oxidoreductase</keyword>
<feature type="chain" id="PRO_0000083742" description="3-isopropylmalate dehydrogenase">
    <location>
        <begin position="1"/>
        <end position="363"/>
    </location>
</feature>
<feature type="binding site" evidence="1">
    <location>
        <begin position="78"/>
        <end position="91"/>
    </location>
    <ligand>
        <name>NAD(+)</name>
        <dbReference type="ChEBI" id="CHEBI:57540"/>
    </ligand>
</feature>
<feature type="binding site" evidence="1">
    <location>
        <position position="99"/>
    </location>
    <ligand>
        <name>substrate</name>
    </ligand>
</feature>
<feature type="binding site" evidence="1">
    <location>
        <position position="109"/>
    </location>
    <ligand>
        <name>substrate</name>
    </ligand>
</feature>
<feature type="binding site" evidence="1">
    <location>
        <position position="138"/>
    </location>
    <ligand>
        <name>substrate</name>
    </ligand>
</feature>
<feature type="binding site" evidence="1">
    <location>
        <position position="227"/>
    </location>
    <ligand>
        <name>Mg(2+)</name>
        <dbReference type="ChEBI" id="CHEBI:18420"/>
    </ligand>
</feature>
<feature type="binding site" evidence="1">
    <location>
        <position position="227"/>
    </location>
    <ligand>
        <name>substrate</name>
    </ligand>
</feature>
<feature type="binding site" evidence="1">
    <location>
        <position position="251"/>
    </location>
    <ligand>
        <name>Mg(2+)</name>
        <dbReference type="ChEBI" id="CHEBI:18420"/>
    </ligand>
</feature>
<feature type="binding site" evidence="1">
    <location>
        <position position="255"/>
    </location>
    <ligand>
        <name>Mg(2+)</name>
        <dbReference type="ChEBI" id="CHEBI:18420"/>
    </ligand>
</feature>
<feature type="binding site" evidence="1">
    <location>
        <begin position="285"/>
        <end position="297"/>
    </location>
    <ligand>
        <name>NAD(+)</name>
        <dbReference type="ChEBI" id="CHEBI:57540"/>
    </ligand>
</feature>
<feature type="site" description="Important for catalysis" evidence="1">
    <location>
        <position position="145"/>
    </location>
</feature>
<feature type="site" description="Important for catalysis" evidence="1">
    <location>
        <position position="195"/>
    </location>
</feature>
<organism>
    <name type="scientific">Salmonella typhi</name>
    <dbReference type="NCBI Taxonomy" id="90370"/>
    <lineage>
        <taxon>Bacteria</taxon>
        <taxon>Pseudomonadati</taxon>
        <taxon>Pseudomonadota</taxon>
        <taxon>Gammaproteobacteria</taxon>
        <taxon>Enterobacterales</taxon>
        <taxon>Enterobacteriaceae</taxon>
        <taxon>Salmonella</taxon>
    </lineage>
</organism>
<sequence length="363" mass="39619">MSKNYHIAVLPGDGIGPEVMAQALKVMDAVRSRFDMRITTSRYDVGGIAIDNHGHPLPKATVEGCEQADAILFGSVGGPKWENLPPESQPERGALLPLRKHFKLFSNLRPAKLYQGLEAFCPLRADIAANGFDILCVRELTGGIYFGQPKGREGSGQYEKAFDTEVYHRFEIERIARIAFESARKRRRKVTSIDKANVLQSSILWREIVNDVAKAYPDVELAHMYIDNATMQLIKDPSQFDVLLCSNLFGDILSDECAMITGSMGMLPSASLNEQEFGLYEPAGGSAPDIAGKNIANPIAQILSLALLLRYSLDADEAATAIEQAINRALEEGVRTSDLARGAAAVSTDEMGDIIARYVAEGV</sequence>
<gene>
    <name evidence="1" type="primary">leuB</name>
    <name type="ordered locus">STY0131</name>
    <name type="ordered locus">t0116</name>
</gene>